<protein>
    <recommendedName>
        <fullName evidence="1">5'-methylthioadenosine/S-adenosylhomocysteine nucleosidase</fullName>
        <shortName evidence="1">MTA/SAH nucleosidase</shortName>
        <shortName evidence="1">MTAN</shortName>
        <ecNumber evidence="1">3.2.2.9</ecNumber>
    </recommendedName>
    <alternativeName>
        <fullName evidence="1">5'-deoxyadenosine nucleosidase</fullName>
        <shortName evidence="1">DOA nucleosidase</shortName>
        <shortName evidence="1">dAdo nucleosidase</shortName>
    </alternativeName>
    <alternativeName>
        <fullName evidence="1">5'-methylthioadenosine nucleosidase</fullName>
        <shortName evidence="1">MTA nucleosidase</shortName>
    </alternativeName>
    <alternativeName>
        <fullName evidence="1">S-adenosylhomocysteine nucleosidase</fullName>
        <shortName evidence="1">AdoHcy nucleosidase</shortName>
        <shortName evidence="1">SAH nucleosidase</shortName>
        <shortName evidence="1">SRH nucleosidase</shortName>
    </alternativeName>
</protein>
<gene>
    <name evidence="1" type="primary">mtnN</name>
    <name type="ordered locus">Sca_1221</name>
</gene>
<feature type="chain" id="PRO_1000187432" description="5'-methylthioadenosine/S-adenosylhomocysteine nucleosidase">
    <location>
        <begin position="1"/>
        <end position="228"/>
    </location>
</feature>
<feature type="active site" description="Proton acceptor" evidence="1">
    <location>
        <position position="11"/>
    </location>
</feature>
<feature type="active site" description="Proton donor" evidence="1">
    <location>
        <position position="196"/>
    </location>
</feature>
<feature type="binding site" evidence="1">
    <location>
        <position position="77"/>
    </location>
    <ligand>
        <name>substrate</name>
    </ligand>
</feature>
<feature type="binding site" evidence="1">
    <location>
        <position position="151"/>
    </location>
    <ligand>
        <name>substrate</name>
    </ligand>
</feature>
<feature type="binding site" evidence="1">
    <location>
        <begin position="172"/>
        <end position="173"/>
    </location>
    <ligand>
        <name>substrate</name>
    </ligand>
</feature>
<name>MTNN_STACT</name>
<keyword id="KW-0028">Amino-acid biosynthesis</keyword>
<keyword id="KW-0378">Hydrolase</keyword>
<keyword id="KW-0486">Methionine biosynthesis</keyword>
<keyword id="KW-1185">Reference proteome</keyword>
<organism>
    <name type="scientific">Staphylococcus carnosus (strain TM300)</name>
    <dbReference type="NCBI Taxonomy" id="396513"/>
    <lineage>
        <taxon>Bacteria</taxon>
        <taxon>Bacillati</taxon>
        <taxon>Bacillota</taxon>
        <taxon>Bacilli</taxon>
        <taxon>Bacillales</taxon>
        <taxon>Staphylococcaceae</taxon>
        <taxon>Staphylococcus</taxon>
    </lineage>
</organism>
<reference key="1">
    <citation type="journal article" date="2009" name="Appl. Environ. Microbiol.">
        <title>Genome analysis of the meat starter culture bacterium Staphylococcus carnosus TM300.</title>
        <authorList>
            <person name="Rosenstein R."/>
            <person name="Nerz C."/>
            <person name="Biswas L."/>
            <person name="Resch A."/>
            <person name="Raddatz G."/>
            <person name="Schuster S.C."/>
            <person name="Goetz F."/>
        </authorList>
    </citation>
    <scope>NUCLEOTIDE SEQUENCE [LARGE SCALE GENOMIC DNA]</scope>
    <source>
        <strain>TM300</strain>
    </source>
</reference>
<accession>B9DNJ2</accession>
<comment type="function">
    <text evidence="1">Catalyzes the irreversible cleavage of the glycosidic bond in both 5'-methylthioadenosine (MTA) and S-adenosylhomocysteine (SAH/AdoHcy) to adenine and the corresponding thioribose, 5'-methylthioribose and S-ribosylhomocysteine, respectively. Also cleaves 5'-deoxyadenosine, a toxic by-product of radical S-adenosylmethionine (SAM) enzymes, into 5-deoxyribose and adenine.</text>
</comment>
<comment type="catalytic activity">
    <reaction evidence="1">
        <text>S-adenosyl-L-homocysteine + H2O = S-(5-deoxy-D-ribos-5-yl)-L-homocysteine + adenine</text>
        <dbReference type="Rhea" id="RHEA:17805"/>
        <dbReference type="ChEBI" id="CHEBI:15377"/>
        <dbReference type="ChEBI" id="CHEBI:16708"/>
        <dbReference type="ChEBI" id="CHEBI:57856"/>
        <dbReference type="ChEBI" id="CHEBI:58195"/>
        <dbReference type="EC" id="3.2.2.9"/>
    </reaction>
</comment>
<comment type="catalytic activity">
    <reaction evidence="1">
        <text>S-methyl-5'-thioadenosine + H2O = 5-(methylsulfanyl)-D-ribose + adenine</text>
        <dbReference type="Rhea" id="RHEA:13617"/>
        <dbReference type="ChEBI" id="CHEBI:15377"/>
        <dbReference type="ChEBI" id="CHEBI:16708"/>
        <dbReference type="ChEBI" id="CHEBI:17509"/>
        <dbReference type="ChEBI" id="CHEBI:78440"/>
        <dbReference type="EC" id="3.2.2.9"/>
    </reaction>
</comment>
<comment type="catalytic activity">
    <reaction evidence="1">
        <text>5'-deoxyadenosine + H2O = 5-deoxy-D-ribose + adenine</text>
        <dbReference type="Rhea" id="RHEA:29859"/>
        <dbReference type="ChEBI" id="CHEBI:15377"/>
        <dbReference type="ChEBI" id="CHEBI:16708"/>
        <dbReference type="ChEBI" id="CHEBI:17319"/>
        <dbReference type="ChEBI" id="CHEBI:149540"/>
        <dbReference type="EC" id="3.2.2.9"/>
    </reaction>
    <physiologicalReaction direction="left-to-right" evidence="1">
        <dbReference type="Rhea" id="RHEA:29860"/>
    </physiologicalReaction>
</comment>
<comment type="pathway">
    <text evidence="1">Amino-acid biosynthesis; L-methionine biosynthesis via salvage pathway; S-methyl-5-thio-alpha-D-ribose 1-phosphate from S-methyl-5'-thioadenosine (hydrolase route): step 1/2.</text>
</comment>
<comment type="similarity">
    <text evidence="1">Belongs to the PNP/UDP phosphorylase family. MtnN subfamily.</text>
</comment>
<proteinExistence type="inferred from homology"/>
<evidence type="ECO:0000255" key="1">
    <source>
        <dbReference type="HAMAP-Rule" id="MF_01684"/>
    </source>
</evidence>
<dbReference type="EC" id="3.2.2.9" evidence="1"/>
<dbReference type="EMBL" id="AM295250">
    <property type="protein sequence ID" value="CAL28128.1"/>
    <property type="molecule type" value="Genomic_DNA"/>
</dbReference>
<dbReference type="RefSeq" id="WP_015900468.1">
    <property type="nucleotide sequence ID" value="NC_012121.1"/>
</dbReference>
<dbReference type="SMR" id="B9DNJ2"/>
<dbReference type="GeneID" id="93793646"/>
<dbReference type="KEGG" id="sca:SCA_1221"/>
<dbReference type="eggNOG" id="COG0775">
    <property type="taxonomic scope" value="Bacteria"/>
</dbReference>
<dbReference type="HOGENOM" id="CLU_031248_2_2_9"/>
<dbReference type="OrthoDB" id="9792278at2"/>
<dbReference type="BioCyc" id="SCAR396513:SCA_RS06110-MONOMER"/>
<dbReference type="UniPathway" id="UPA00904">
    <property type="reaction ID" value="UER00871"/>
</dbReference>
<dbReference type="Proteomes" id="UP000000444">
    <property type="component" value="Chromosome"/>
</dbReference>
<dbReference type="GO" id="GO:0005829">
    <property type="term" value="C:cytosol"/>
    <property type="evidence" value="ECO:0007669"/>
    <property type="project" value="TreeGrafter"/>
</dbReference>
<dbReference type="GO" id="GO:0008782">
    <property type="term" value="F:adenosylhomocysteine nucleosidase activity"/>
    <property type="evidence" value="ECO:0007669"/>
    <property type="project" value="UniProtKB-UniRule"/>
</dbReference>
<dbReference type="GO" id="GO:0008930">
    <property type="term" value="F:methylthioadenosine nucleosidase activity"/>
    <property type="evidence" value="ECO:0007669"/>
    <property type="project" value="UniProtKB-UniRule"/>
</dbReference>
<dbReference type="GO" id="GO:0019509">
    <property type="term" value="P:L-methionine salvage from methylthioadenosine"/>
    <property type="evidence" value="ECO:0007669"/>
    <property type="project" value="UniProtKB-UniRule"/>
</dbReference>
<dbReference type="GO" id="GO:0019284">
    <property type="term" value="P:L-methionine salvage from S-adenosylmethionine"/>
    <property type="evidence" value="ECO:0007669"/>
    <property type="project" value="TreeGrafter"/>
</dbReference>
<dbReference type="GO" id="GO:0009164">
    <property type="term" value="P:nucleoside catabolic process"/>
    <property type="evidence" value="ECO:0007669"/>
    <property type="project" value="InterPro"/>
</dbReference>
<dbReference type="CDD" id="cd09008">
    <property type="entry name" value="MTAN"/>
    <property type="match status" value="1"/>
</dbReference>
<dbReference type="FunFam" id="3.40.50.1580:FF:000001">
    <property type="entry name" value="MTA/SAH nucleosidase family protein"/>
    <property type="match status" value="1"/>
</dbReference>
<dbReference type="Gene3D" id="3.40.50.1580">
    <property type="entry name" value="Nucleoside phosphorylase domain"/>
    <property type="match status" value="1"/>
</dbReference>
<dbReference type="HAMAP" id="MF_01684">
    <property type="entry name" value="Salvage_MtnN"/>
    <property type="match status" value="1"/>
</dbReference>
<dbReference type="InterPro" id="IPR010049">
    <property type="entry name" value="MTA_SAH_Nsdase"/>
</dbReference>
<dbReference type="InterPro" id="IPR000845">
    <property type="entry name" value="Nucleoside_phosphorylase_d"/>
</dbReference>
<dbReference type="InterPro" id="IPR035994">
    <property type="entry name" value="Nucleoside_phosphorylase_sf"/>
</dbReference>
<dbReference type="NCBIfam" id="TIGR01704">
    <property type="entry name" value="MTA_SAH-Nsdase"/>
    <property type="match status" value="1"/>
</dbReference>
<dbReference type="NCBIfam" id="NF004079">
    <property type="entry name" value="PRK05584.1"/>
    <property type="match status" value="1"/>
</dbReference>
<dbReference type="PANTHER" id="PTHR46832">
    <property type="entry name" value="5'-METHYLTHIOADENOSINE/S-ADENOSYLHOMOCYSTEINE NUCLEOSIDASE"/>
    <property type="match status" value="1"/>
</dbReference>
<dbReference type="PANTHER" id="PTHR46832:SF1">
    <property type="entry name" value="5'-METHYLTHIOADENOSINE_S-ADENOSYLHOMOCYSTEINE NUCLEOSIDASE"/>
    <property type="match status" value="1"/>
</dbReference>
<dbReference type="Pfam" id="PF01048">
    <property type="entry name" value="PNP_UDP_1"/>
    <property type="match status" value="1"/>
</dbReference>
<dbReference type="SUPFAM" id="SSF53167">
    <property type="entry name" value="Purine and uridine phosphorylases"/>
    <property type="match status" value="1"/>
</dbReference>
<sequence>MIGIIGAMEEEILILKEKITDLEEISIAHVKFYKGYIDNQEVVLTLSGIGKVNAAISTTLLINTFSPDVILNTGSAGALDHSLNIGDVLISTEATYHDADATAFGYELGQIPNMPIAYAADDDLVTLAQSVVEQQEMNGKLGLIVSGDSFIGEVSQRETIKTNFPDAMAVEMEATAIAQTCYQFKVPFIITRAVSDLANGEANMTFDEFIGEAAKSSSEIVLEMLKSL</sequence>